<organism>
    <name type="scientific">Muntiacus muntjak</name>
    <name type="common">Barking deer</name>
    <name type="synonym">Indian muntjac</name>
    <dbReference type="NCBI Taxonomy" id="9888"/>
    <lineage>
        <taxon>Eukaryota</taxon>
        <taxon>Metazoa</taxon>
        <taxon>Chordata</taxon>
        <taxon>Craniata</taxon>
        <taxon>Vertebrata</taxon>
        <taxon>Euteleostomi</taxon>
        <taxon>Mammalia</taxon>
        <taxon>Eutheria</taxon>
        <taxon>Laurasiatheria</taxon>
        <taxon>Artiodactyla</taxon>
        <taxon>Ruminantia</taxon>
        <taxon>Pecora</taxon>
        <taxon>Cervidae</taxon>
        <taxon>Muntiacinae</taxon>
        <taxon>Muntiacus</taxon>
    </lineage>
</organism>
<keyword id="KW-1003">Cell membrane</keyword>
<keyword id="KW-0963">Cytoplasm</keyword>
<keyword id="KW-0333">Golgi apparatus</keyword>
<keyword id="KW-0472">Membrane</keyword>
<keyword id="KW-0539">Nucleus</keyword>
<keyword id="KW-0597">Phosphoprotein</keyword>
<protein>
    <recommendedName>
        <fullName>Caveolin-2</fullName>
    </recommendedName>
</protein>
<reference key="1">
    <citation type="submission" date="2006-09" db="EMBL/GenBank/DDBJ databases">
        <title>NISC comparative sequencing initiative.</title>
        <authorList>
            <person name="Antonellis A."/>
            <person name="Ayele K."/>
            <person name="Benjamin B."/>
            <person name="Blakesley R.W."/>
            <person name="Boakye A."/>
            <person name="Bouffard G.G."/>
            <person name="Brinkley C."/>
            <person name="Brooks S."/>
            <person name="Chu G."/>
            <person name="Coleman H."/>
            <person name="Engle J."/>
            <person name="Gestole M."/>
            <person name="Greene A."/>
            <person name="Guan X."/>
            <person name="Gupta J."/>
            <person name="Haghighi P."/>
            <person name="Han J."/>
            <person name="Hansen N."/>
            <person name="Ho S.-L."/>
            <person name="Hu P."/>
            <person name="Hunter G."/>
            <person name="Hurle B."/>
            <person name="Idol J.R."/>
            <person name="Kwong P."/>
            <person name="Laric P."/>
            <person name="Larson S."/>
            <person name="Lee-Lin S.-Q."/>
            <person name="Legaspi R."/>
            <person name="Madden M."/>
            <person name="Maduro Q.L."/>
            <person name="Maduro V.B."/>
            <person name="Margulies E.H."/>
            <person name="Masiello C."/>
            <person name="Maskeri B."/>
            <person name="McDowell J."/>
            <person name="Mojidi H.A."/>
            <person name="Mullikin J.C."/>
            <person name="Oestreicher J.S."/>
            <person name="Park M."/>
            <person name="Portnoy M.E."/>
            <person name="Prasad A."/>
            <person name="Puri O."/>
            <person name="Reddix-Dugue N."/>
            <person name="Schandler K."/>
            <person name="Schueler M.G."/>
            <person name="Sison C."/>
            <person name="Stantripop S."/>
            <person name="Stephen E."/>
            <person name="Taye A."/>
            <person name="Thomas J.W."/>
            <person name="Thomas P.J."/>
            <person name="Tsipouri V."/>
            <person name="Ung L."/>
            <person name="Vogt J.L."/>
            <person name="Wetherby K.D."/>
            <person name="Young A."/>
            <person name="Green E.D."/>
        </authorList>
    </citation>
    <scope>NUCLEOTIDE SEQUENCE [LARGE SCALE GENOMIC DNA]</scope>
</reference>
<gene>
    <name type="primary">CAV2</name>
</gene>
<accession>Q09YK2</accession>
<dbReference type="EMBL" id="DP000178">
    <property type="protein sequence ID" value="ABI75278.1"/>
    <property type="molecule type" value="Genomic_DNA"/>
</dbReference>
<dbReference type="SMR" id="Q09YK2"/>
<dbReference type="GO" id="GO:0005901">
    <property type="term" value="C:caveola"/>
    <property type="evidence" value="ECO:0000250"/>
    <property type="project" value="UniProtKB"/>
</dbReference>
<dbReference type="GO" id="GO:0031410">
    <property type="term" value="C:cytoplasmic vesicle"/>
    <property type="evidence" value="ECO:0007669"/>
    <property type="project" value="TreeGrafter"/>
</dbReference>
<dbReference type="GO" id="GO:0005925">
    <property type="term" value="C:focal adhesion"/>
    <property type="evidence" value="ECO:0007669"/>
    <property type="project" value="TreeGrafter"/>
</dbReference>
<dbReference type="GO" id="GO:0000139">
    <property type="term" value="C:Golgi membrane"/>
    <property type="evidence" value="ECO:0007669"/>
    <property type="project" value="UniProtKB-SubCell"/>
</dbReference>
<dbReference type="GO" id="GO:0005634">
    <property type="term" value="C:nucleus"/>
    <property type="evidence" value="ECO:0007669"/>
    <property type="project" value="UniProtKB-SubCell"/>
</dbReference>
<dbReference type="GO" id="GO:0048471">
    <property type="term" value="C:perinuclear region of cytoplasm"/>
    <property type="evidence" value="ECO:0000250"/>
    <property type="project" value="UniProtKB"/>
</dbReference>
<dbReference type="GO" id="GO:0044853">
    <property type="term" value="C:plasma membrane raft"/>
    <property type="evidence" value="ECO:0000250"/>
    <property type="project" value="UniProtKB"/>
</dbReference>
<dbReference type="GO" id="GO:0042383">
    <property type="term" value="C:sarcolemma"/>
    <property type="evidence" value="ECO:0007669"/>
    <property type="project" value="TreeGrafter"/>
</dbReference>
<dbReference type="GO" id="GO:0031748">
    <property type="term" value="F:D1 dopamine receptor binding"/>
    <property type="evidence" value="ECO:0000250"/>
    <property type="project" value="UniProtKB"/>
</dbReference>
<dbReference type="GO" id="GO:0060090">
    <property type="term" value="F:molecular adaptor activity"/>
    <property type="evidence" value="ECO:0007669"/>
    <property type="project" value="TreeGrafter"/>
</dbReference>
<dbReference type="GO" id="GO:0019901">
    <property type="term" value="F:protein kinase binding"/>
    <property type="evidence" value="ECO:0007669"/>
    <property type="project" value="TreeGrafter"/>
</dbReference>
<dbReference type="GO" id="GO:0070836">
    <property type="term" value="P:caveola assembly"/>
    <property type="evidence" value="ECO:0000250"/>
    <property type="project" value="UniProtKB"/>
</dbReference>
<dbReference type="GO" id="GO:0007029">
    <property type="term" value="P:endoplasmic reticulum organization"/>
    <property type="evidence" value="ECO:0000250"/>
    <property type="project" value="UniProtKB"/>
</dbReference>
<dbReference type="GO" id="GO:0008286">
    <property type="term" value="P:insulin receptor signaling pathway"/>
    <property type="evidence" value="ECO:0007669"/>
    <property type="project" value="TreeGrafter"/>
</dbReference>
<dbReference type="GO" id="GO:0007005">
    <property type="term" value="P:mitochondrion organization"/>
    <property type="evidence" value="ECO:0000250"/>
    <property type="project" value="UniProtKB"/>
</dbReference>
<dbReference type="GO" id="GO:0001937">
    <property type="term" value="P:negative regulation of endothelial cell proliferation"/>
    <property type="evidence" value="ECO:0000250"/>
    <property type="project" value="UniProtKB"/>
</dbReference>
<dbReference type="GO" id="GO:0060161">
    <property type="term" value="P:positive regulation of dopamine receptor signaling pathway"/>
    <property type="evidence" value="ECO:0000250"/>
    <property type="project" value="UniProtKB"/>
</dbReference>
<dbReference type="GO" id="GO:0051480">
    <property type="term" value="P:regulation of cytosolic calcium ion concentration"/>
    <property type="evidence" value="ECO:0007669"/>
    <property type="project" value="TreeGrafter"/>
</dbReference>
<dbReference type="GO" id="GO:0048741">
    <property type="term" value="P:skeletal muscle fiber development"/>
    <property type="evidence" value="ECO:0000250"/>
    <property type="project" value="UniProtKB"/>
</dbReference>
<dbReference type="GO" id="GO:0048278">
    <property type="term" value="P:vesicle docking"/>
    <property type="evidence" value="ECO:0000250"/>
    <property type="project" value="UniProtKB"/>
</dbReference>
<dbReference type="GO" id="GO:0006906">
    <property type="term" value="P:vesicle fusion"/>
    <property type="evidence" value="ECO:0000250"/>
    <property type="project" value="UniProtKB"/>
</dbReference>
<dbReference type="InterPro" id="IPR001612">
    <property type="entry name" value="Caveolin"/>
</dbReference>
<dbReference type="InterPro" id="IPR018361">
    <property type="entry name" value="Caveolin_CS"/>
</dbReference>
<dbReference type="PANTHER" id="PTHR10844">
    <property type="entry name" value="CAVEOLIN"/>
    <property type="match status" value="1"/>
</dbReference>
<dbReference type="PANTHER" id="PTHR10844:SF3">
    <property type="entry name" value="CAVEOLIN-2"/>
    <property type="match status" value="1"/>
</dbReference>
<dbReference type="Pfam" id="PF01146">
    <property type="entry name" value="Caveolin"/>
    <property type="match status" value="1"/>
</dbReference>
<dbReference type="PROSITE" id="PS01210">
    <property type="entry name" value="CAVEOLIN"/>
    <property type="match status" value="1"/>
</dbReference>
<evidence type="ECO:0000250" key="1"/>
<evidence type="ECO:0000250" key="2">
    <source>
        <dbReference type="UniProtKB" id="P51636"/>
    </source>
</evidence>
<evidence type="ECO:0000250" key="3">
    <source>
        <dbReference type="UniProtKB" id="Q9WVC3"/>
    </source>
</evidence>
<evidence type="ECO:0000255" key="4"/>
<evidence type="ECO:0000305" key="5"/>
<sequence>MGLETEKADVQLFMDDDSYSRHSSVDYADPDKFVDPGSDRDPHRLNSHLKVGFEDVIAEPVSTHSFDKVWICSHALFEMSKYVIYKFLTVFLAIPLAFAAGILFATLSCLHIWIIMPFVKTCLMVLPSVQTIWKSVTDVVIAPLCTSVGRSFSSVSLQLSHD</sequence>
<comment type="function">
    <text evidence="1">May act as a scaffolding protein within caveolar membranes. Interacts directly with G-protein alpha subunits and can functionally regulate their activity. Acts as an accessory protein in conjunction with CAV1 in targeting to lipid rafts and driving caveolae formation. Positive regulator of cellular mitogenesis of the MAPK signaling pathway. Required for the insulin-stimulated nuclear translocation and activation of MAPK1 and STAT3, and the subsequent regulation of cell cycle progression (By similarity).</text>
</comment>
<comment type="subunit">
    <text evidence="1">Monomer or homodimer (By similarity). Interacts with CAV1; the interaction forms a stable heterooligomeric complex that is required for targeting to lipid rafts and for caveolae formation. Tyrosine phosphorylated forms do not form heterooligomers with the Tyr-19-phosphorylated form existing as a monomer or dimer, and the Tyr-27-form as a monomer only. Interacts (tyrosine phosphorylated form) with the SH2 domain-containing proteins, RASA1, NCK1 and SRC. Interacts (tyrosine phosphorylated form) with INSR, the interaction (Tyr-27-phosphorylated form) is increased on insulin stimulation. Interacts (Tyr-19 phosphorylated form) with MAPK1 (phosphorylated form); the interaction, promoted by insulin, leads to nuclear location and MAPK1 activation. Interacts with STAT3; the interaction is increased on insulin-induced tyrosine phosphorylation leading to STAT activation (By similarity).</text>
</comment>
<comment type="subcellular location">
    <subcellularLocation>
        <location evidence="1">Nucleus</location>
    </subcellularLocation>
    <subcellularLocation>
        <location evidence="1">Cytoplasm</location>
    </subcellularLocation>
    <subcellularLocation>
        <location>Golgi apparatus membrane</location>
        <topology>Peripheral membrane protein</topology>
    </subcellularLocation>
    <subcellularLocation>
        <location>Cell membrane</location>
        <topology>Peripheral membrane protein</topology>
    </subcellularLocation>
    <subcellularLocation>
        <location>Membrane</location>
        <location>Caveola</location>
        <topology>Peripheral membrane protein</topology>
    </subcellularLocation>
    <text evidence="1">Potential hairpin-like structure in the membrane. Membrane protein of caveolae. Tyr-19-phosphorylated form is enriched at sites of cell-cell contact and is translocated to the nucleus in complex with MAPK1 in response to insulin. Tyr-27-phosphorylated form is located both in the cytoplasm and plasma membrane. CAV1-mediated Ser-23-phosphorylated form locates to the plasma membrane (By similarity).</text>
</comment>
<comment type="PTM">
    <text evidence="1">Phosphorylated on serine and tyrosine residues. CAV1 promotes phosphorylation on Ser-23 which then targets the complex to the plasma membrane, lipid rafts and caveolae. Phosphorylation on both Tyr-19 and Tyr-27 is required for insulin-induced 'Ser-727' phosphorylation of STAT3 and its activation. Phosphorylation on Tyr-19 is required for insulin-induced phosphorylation of MAPK1 and DNA binding of STAT3. Tyrosine phosphorylation is induced by both EGF and insulin (By similarity).</text>
</comment>
<comment type="similarity">
    <text evidence="5">Belongs to the caveolin family.</text>
</comment>
<feature type="chain" id="PRO_0000260379" description="Caveolin-2">
    <location>
        <begin position="1"/>
        <end position="162"/>
    </location>
</feature>
<feature type="topological domain" description="Cytoplasmic" evidence="4">
    <location>
        <begin position="1"/>
        <end position="86"/>
    </location>
</feature>
<feature type="intramembrane region" description="Helical" evidence="4">
    <location>
        <begin position="87"/>
        <end position="107"/>
    </location>
</feature>
<feature type="topological domain" description="Cytoplasmic" evidence="4">
    <location>
        <begin position="108"/>
        <end position="162"/>
    </location>
</feature>
<feature type="modified residue" description="Phosphotyrosine; by SRC" evidence="2">
    <location>
        <position position="19"/>
    </location>
</feature>
<feature type="modified residue" description="Phosphoserine" evidence="3">
    <location>
        <position position="20"/>
    </location>
</feature>
<feature type="modified residue" description="Phosphoserine" evidence="2">
    <location>
        <position position="23"/>
    </location>
</feature>
<feature type="modified residue" description="Phosphotyrosine; by SRC" evidence="2">
    <location>
        <position position="27"/>
    </location>
</feature>
<name>CAV2_MUNMU</name>
<proteinExistence type="inferred from homology"/>